<comment type="function">
    <text evidence="1">Replicates viral genomic DNA.</text>
</comment>
<comment type="catalytic activity">
    <reaction>
        <text>DNA(n) + a 2'-deoxyribonucleoside 5'-triphosphate = DNA(n+1) + diphosphate</text>
        <dbReference type="Rhea" id="RHEA:22508"/>
        <dbReference type="Rhea" id="RHEA-COMP:17339"/>
        <dbReference type="Rhea" id="RHEA-COMP:17340"/>
        <dbReference type="ChEBI" id="CHEBI:33019"/>
        <dbReference type="ChEBI" id="CHEBI:61560"/>
        <dbReference type="ChEBI" id="CHEBI:173112"/>
        <dbReference type="EC" id="2.7.7.7"/>
    </reaction>
</comment>
<comment type="subcellular location">
    <subcellularLocation>
        <location evidence="1">Host nucleus</location>
    </subcellularLocation>
</comment>
<comment type="similarity">
    <text evidence="3">Belongs to the DNA polymerase type-B family.</text>
</comment>
<evidence type="ECO:0000250" key="1"/>
<evidence type="ECO:0000255" key="2"/>
<evidence type="ECO:0000305" key="3"/>
<feature type="chain" id="PRO_0000405694" description="DNA polymerase catalytic subunit">
    <location>
        <begin position="1"/>
        <end position="1026"/>
    </location>
</feature>
<feature type="coiled-coil region" evidence="2">
    <location>
        <begin position="664"/>
        <end position="695"/>
    </location>
</feature>
<proteinExistence type="inferred from homology"/>
<organism>
    <name type="scientific">Alcelaphine herpesvirus 1 (strain C500)</name>
    <name type="common">AlHV-1</name>
    <name type="synonym">Malignant catarrhal fever virus</name>
    <dbReference type="NCBI Taxonomy" id="654901"/>
    <lineage>
        <taxon>Viruses</taxon>
        <taxon>Duplodnaviria</taxon>
        <taxon>Heunggongvirae</taxon>
        <taxon>Peploviricota</taxon>
        <taxon>Herviviricetes</taxon>
        <taxon>Herpesvirales</taxon>
        <taxon>Orthoherpesviridae</taxon>
        <taxon>Gammaherpesvirinae</taxon>
        <taxon>Macavirus</taxon>
        <taxon>Macavirus alcelaphinegamma1</taxon>
    </lineage>
</organism>
<accession>O36363</accession>
<keyword id="KW-0175">Coiled coil</keyword>
<keyword id="KW-0235">DNA replication</keyword>
<keyword id="KW-0238">DNA-binding</keyword>
<keyword id="KW-0239">DNA-directed DNA polymerase</keyword>
<keyword id="KW-1048">Host nucleus</keyword>
<keyword id="KW-0548">Nucleotidyltransferase</keyword>
<keyword id="KW-1185">Reference proteome</keyword>
<keyword id="KW-0808">Transferase</keyword>
<keyword id="KW-1194">Viral DNA replication</keyword>
<organismHost>
    <name type="scientific">Connochaetes taurinus</name>
    <name type="common">Blue wildebeest</name>
    <dbReference type="NCBI Taxonomy" id="9927"/>
</organismHost>
<name>DPOL_ALHV1</name>
<sequence>MMCFFFFSLQPCLFKLPLPLPLKKNTAMLSFWNPYLRGFKAPTPATKSKPKASTIYHRLIPKCFKKDERENGGIFAIETAIPPTAFYLDSELLVLPENKSSLWANETLGNCHSIQELMFHVYDIVEVVYAADRCDSIPPHLQADIVPSGIVLKLYGRTETNQSVCVNVFGQKVYFYVYNDSYSNLQRDVQHILQETGHRSTGLHLCSTQKKFLSGYSTSSHEVYQITLGSSSAMRSLASGLEQIGYRVFEANVDASTRFIVDNKFSTFGWYTCTSPLARPRVHQDAHTHLEYDCSVGDIQYHAERLDWPQYNILSFDIECLGESGFPSADKDEDMIIQISCVIWTVGGDKKQECILLSVGTCDLIENVKVYEFPSEMDLLYGFFTLLRDYGIEMITGYNICNFDFPYILNRAQNVYNIKPEDFSKTKTNSLFYVYTPQEGNFMRSHSKVKMSGVVVIDMYQVCRDKLNLSNYKLNTVAKECLGEKKNDVSYKDIPILFKGSSKDRAKLGMYCVQDAVLVIDLLKHFMTHIEITEIAKIANIPTRRVLSDGQQIRVFTCLLAAAQERDYILPMPVTGSQEGYQGATVINPISGFYNTPVLVVDFASLYPSIIQAHNLCYSTLIKQQDLPKFTNLTANDYETFMISGGPVHFVKKHKTESLLASLLKTWLAKRKSIKKELEQCQDAKMKTILDKQQLAIKVTCNSVYGFTGVASGMLPCLMIAETVTLQGRTMLEKTKQFVENVTVEYLQKICNFEVQCLPQHPNPKFRVVYGDTDSLFIKCEGFAMDTVIKFGDALASHTSSVLFASPIKLESEKVFKCLMLLTKKRYVGILSNNKILMKGVDLVRKTACVYVQEVTRAVLELLLRDEEVKVAAQTLSYSPVANCFKTEPLLGFLKIIDILNQSYSDLKSNKVPVANLTYSTELSKPFTEYKTTNLPHLAVYKKLAMRNEELPQIHDRISYVFVKSNGHLVSDMAEDPTYAEQNKIPIASDWYFDKIIHGVANILQCVFNNNTSATVEVLYNFVRNP</sequence>
<protein>
    <recommendedName>
        <fullName>DNA polymerase catalytic subunit</fullName>
        <ecNumber>2.7.7.7</ecNumber>
    </recommendedName>
</protein>
<reference key="1">
    <citation type="journal article" date="1997" name="J. Virol.">
        <title>Primary structure of the alcelaphine herpesvirus 1 genome.</title>
        <authorList>
            <person name="Ensser A."/>
            <person name="Pflanz R."/>
            <person name="Fleckenstein B."/>
        </authorList>
    </citation>
    <scope>NUCLEOTIDE SEQUENCE [LARGE SCALE GENOMIC DNA]</scope>
</reference>
<dbReference type="EC" id="2.7.7.7"/>
<dbReference type="EMBL" id="AF005370">
    <property type="protein sequence ID" value="AAC58060.1"/>
    <property type="molecule type" value="Genomic_DNA"/>
</dbReference>
<dbReference type="PIR" id="T03108">
    <property type="entry name" value="T03108"/>
</dbReference>
<dbReference type="RefSeq" id="NP_065512.1">
    <property type="nucleotide sequence ID" value="NC_002531.1"/>
</dbReference>
<dbReference type="SMR" id="O36363"/>
<dbReference type="KEGG" id="vg:911748"/>
<dbReference type="Proteomes" id="UP000000941">
    <property type="component" value="Segment"/>
</dbReference>
<dbReference type="GO" id="GO:0042025">
    <property type="term" value="C:host cell nucleus"/>
    <property type="evidence" value="ECO:0007669"/>
    <property type="project" value="UniProtKB-SubCell"/>
</dbReference>
<dbReference type="GO" id="GO:0003677">
    <property type="term" value="F:DNA binding"/>
    <property type="evidence" value="ECO:0007669"/>
    <property type="project" value="UniProtKB-KW"/>
</dbReference>
<dbReference type="GO" id="GO:0003887">
    <property type="term" value="F:DNA-directed DNA polymerase activity"/>
    <property type="evidence" value="ECO:0007669"/>
    <property type="project" value="UniProtKB-KW"/>
</dbReference>
<dbReference type="GO" id="GO:0000166">
    <property type="term" value="F:nucleotide binding"/>
    <property type="evidence" value="ECO:0007669"/>
    <property type="project" value="InterPro"/>
</dbReference>
<dbReference type="GO" id="GO:0006261">
    <property type="term" value="P:DNA-templated DNA replication"/>
    <property type="evidence" value="ECO:0007669"/>
    <property type="project" value="TreeGrafter"/>
</dbReference>
<dbReference type="GO" id="GO:0039693">
    <property type="term" value="P:viral DNA genome replication"/>
    <property type="evidence" value="ECO:0007669"/>
    <property type="project" value="UniProtKB-KW"/>
</dbReference>
<dbReference type="FunFam" id="3.30.420.10:FF:000004">
    <property type="entry name" value="DNA polymerase"/>
    <property type="match status" value="1"/>
</dbReference>
<dbReference type="Gene3D" id="1.10.132.60">
    <property type="entry name" value="DNA polymerase family B, C-terminal domain"/>
    <property type="match status" value="1"/>
</dbReference>
<dbReference type="Gene3D" id="3.30.342.10">
    <property type="entry name" value="DNA Polymerase, chain B, domain 1"/>
    <property type="match status" value="1"/>
</dbReference>
<dbReference type="Gene3D" id="1.10.287.690">
    <property type="entry name" value="Helix hairpin bin"/>
    <property type="match status" value="1"/>
</dbReference>
<dbReference type="Gene3D" id="3.90.1600.10">
    <property type="entry name" value="Palm domain of DNA polymerase"/>
    <property type="match status" value="1"/>
</dbReference>
<dbReference type="Gene3D" id="3.30.420.10">
    <property type="entry name" value="Ribonuclease H-like superfamily/Ribonuclease H"/>
    <property type="match status" value="1"/>
</dbReference>
<dbReference type="InterPro" id="IPR006172">
    <property type="entry name" value="DNA-dir_DNA_pol_B"/>
</dbReference>
<dbReference type="InterPro" id="IPR017964">
    <property type="entry name" value="DNA-dir_DNA_pol_B_CS"/>
</dbReference>
<dbReference type="InterPro" id="IPR006133">
    <property type="entry name" value="DNA-dir_DNA_pol_B_exonuc"/>
</dbReference>
<dbReference type="InterPro" id="IPR006134">
    <property type="entry name" value="DNA-dir_DNA_pol_B_multi_dom"/>
</dbReference>
<dbReference type="InterPro" id="IPR043502">
    <property type="entry name" value="DNA/RNA_pol_sf"/>
</dbReference>
<dbReference type="InterPro" id="IPR042087">
    <property type="entry name" value="DNA_pol_B_thumb"/>
</dbReference>
<dbReference type="InterPro" id="IPR023211">
    <property type="entry name" value="DNA_pol_palm_dom_sf"/>
</dbReference>
<dbReference type="InterPro" id="IPR050240">
    <property type="entry name" value="DNA_pol_type-B"/>
</dbReference>
<dbReference type="InterPro" id="IPR012337">
    <property type="entry name" value="RNaseH-like_sf"/>
</dbReference>
<dbReference type="InterPro" id="IPR036397">
    <property type="entry name" value="RNaseH_sf"/>
</dbReference>
<dbReference type="PANTHER" id="PTHR10322">
    <property type="entry name" value="DNA POLYMERASE CATALYTIC SUBUNIT"/>
    <property type="match status" value="1"/>
</dbReference>
<dbReference type="PANTHER" id="PTHR10322:SF23">
    <property type="entry name" value="DNA POLYMERASE DELTA CATALYTIC SUBUNIT"/>
    <property type="match status" value="1"/>
</dbReference>
<dbReference type="Pfam" id="PF00136">
    <property type="entry name" value="DNA_pol_B"/>
    <property type="match status" value="1"/>
</dbReference>
<dbReference type="Pfam" id="PF03104">
    <property type="entry name" value="DNA_pol_B_exo1"/>
    <property type="match status" value="1"/>
</dbReference>
<dbReference type="PRINTS" id="PR00106">
    <property type="entry name" value="DNAPOLB"/>
</dbReference>
<dbReference type="SMART" id="SM00486">
    <property type="entry name" value="POLBc"/>
    <property type="match status" value="1"/>
</dbReference>
<dbReference type="SUPFAM" id="SSF56672">
    <property type="entry name" value="DNA/RNA polymerases"/>
    <property type="match status" value="1"/>
</dbReference>
<dbReference type="SUPFAM" id="SSF53098">
    <property type="entry name" value="Ribonuclease H-like"/>
    <property type="match status" value="1"/>
</dbReference>
<dbReference type="PROSITE" id="PS00116">
    <property type="entry name" value="DNA_POLYMERASE_B"/>
    <property type="match status" value="1"/>
</dbReference>
<gene>
    <name type="primary">9</name>
</gene>